<proteinExistence type="inferred from homology"/>
<organism>
    <name type="scientific">Legionella pneumophila (strain Corby)</name>
    <dbReference type="NCBI Taxonomy" id="400673"/>
    <lineage>
        <taxon>Bacteria</taxon>
        <taxon>Pseudomonadati</taxon>
        <taxon>Pseudomonadota</taxon>
        <taxon>Gammaproteobacteria</taxon>
        <taxon>Legionellales</taxon>
        <taxon>Legionellaceae</taxon>
        <taxon>Legionella</taxon>
    </lineage>
</organism>
<gene>
    <name evidence="1" type="primary">leuS</name>
    <name type="ordered locus">LPC_0764</name>
</gene>
<protein>
    <recommendedName>
        <fullName evidence="1">Leucine--tRNA ligase</fullName>
        <ecNumber evidence="1">6.1.1.4</ecNumber>
    </recommendedName>
    <alternativeName>
        <fullName evidence="1">Leucyl-tRNA synthetase</fullName>
        <shortName evidence="1">LeuRS</shortName>
    </alternativeName>
</protein>
<name>SYL_LEGPC</name>
<reference key="1">
    <citation type="submission" date="2006-11" db="EMBL/GenBank/DDBJ databases">
        <title>Identification and characterization of a new conjugation/ type IVA secretion system (trb/tra) of L. pneumophila Corby localized on a mobile genomic island.</title>
        <authorList>
            <person name="Gloeckner G."/>
            <person name="Albert-Weissenberger C."/>
            <person name="Weinmann E."/>
            <person name="Jacobi S."/>
            <person name="Schunder E."/>
            <person name="Steinert M."/>
            <person name="Buchrieser C."/>
            <person name="Hacker J."/>
            <person name="Heuner K."/>
        </authorList>
    </citation>
    <scope>NUCLEOTIDE SEQUENCE [LARGE SCALE GENOMIC DNA]</scope>
    <source>
        <strain>Corby</strain>
    </source>
</reference>
<keyword id="KW-0030">Aminoacyl-tRNA synthetase</keyword>
<keyword id="KW-0067">ATP-binding</keyword>
<keyword id="KW-0963">Cytoplasm</keyword>
<keyword id="KW-0436">Ligase</keyword>
<keyword id="KW-0547">Nucleotide-binding</keyword>
<keyword id="KW-0648">Protein biosynthesis</keyword>
<comment type="catalytic activity">
    <reaction evidence="1">
        <text>tRNA(Leu) + L-leucine + ATP = L-leucyl-tRNA(Leu) + AMP + diphosphate</text>
        <dbReference type="Rhea" id="RHEA:11688"/>
        <dbReference type="Rhea" id="RHEA-COMP:9613"/>
        <dbReference type="Rhea" id="RHEA-COMP:9622"/>
        <dbReference type="ChEBI" id="CHEBI:30616"/>
        <dbReference type="ChEBI" id="CHEBI:33019"/>
        <dbReference type="ChEBI" id="CHEBI:57427"/>
        <dbReference type="ChEBI" id="CHEBI:78442"/>
        <dbReference type="ChEBI" id="CHEBI:78494"/>
        <dbReference type="ChEBI" id="CHEBI:456215"/>
        <dbReference type="EC" id="6.1.1.4"/>
    </reaction>
</comment>
<comment type="subcellular location">
    <subcellularLocation>
        <location evidence="1">Cytoplasm</location>
    </subcellularLocation>
</comment>
<comment type="similarity">
    <text evidence="1">Belongs to the class-I aminoacyl-tRNA synthetase family.</text>
</comment>
<dbReference type="EC" id="6.1.1.4" evidence="1"/>
<dbReference type="EMBL" id="CP000675">
    <property type="protein sequence ID" value="ABQ54741.1"/>
    <property type="molecule type" value="Genomic_DNA"/>
</dbReference>
<dbReference type="RefSeq" id="WP_011946380.1">
    <property type="nucleotide sequence ID" value="NC_009494.2"/>
</dbReference>
<dbReference type="SMR" id="A5IBJ1"/>
<dbReference type="KEGG" id="lpc:LPC_0764"/>
<dbReference type="HOGENOM" id="CLU_004427_0_0_6"/>
<dbReference type="GO" id="GO:0005829">
    <property type="term" value="C:cytosol"/>
    <property type="evidence" value="ECO:0007669"/>
    <property type="project" value="TreeGrafter"/>
</dbReference>
<dbReference type="GO" id="GO:0002161">
    <property type="term" value="F:aminoacyl-tRNA deacylase activity"/>
    <property type="evidence" value="ECO:0007669"/>
    <property type="project" value="InterPro"/>
</dbReference>
<dbReference type="GO" id="GO:0005524">
    <property type="term" value="F:ATP binding"/>
    <property type="evidence" value="ECO:0007669"/>
    <property type="project" value="UniProtKB-UniRule"/>
</dbReference>
<dbReference type="GO" id="GO:0004823">
    <property type="term" value="F:leucine-tRNA ligase activity"/>
    <property type="evidence" value="ECO:0007669"/>
    <property type="project" value="UniProtKB-UniRule"/>
</dbReference>
<dbReference type="GO" id="GO:0006429">
    <property type="term" value="P:leucyl-tRNA aminoacylation"/>
    <property type="evidence" value="ECO:0007669"/>
    <property type="project" value="UniProtKB-UniRule"/>
</dbReference>
<dbReference type="CDD" id="cd07958">
    <property type="entry name" value="Anticodon_Ia_Leu_BEm"/>
    <property type="match status" value="1"/>
</dbReference>
<dbReference type="CDD" id="cd00812">
    <property type="entry name" value="LeuRS_core"/>
    <property type="match status" value="1"/>
</dbReference>
<dbReference type="FunFam" id="1.10.730.10:FF:000003">
    <property type="entry name" value="Leucine--tRNA ligase"/>
    <property type="match status" value="1"/>
</dbReference>
<dbReference type="FunFam" id="3.40.50.620:FF:000056">
    <property type="entry name" value="Leucine--tRNA ligase"/>
    <property type="match status" value="1"/>
</dbReference>
<dbReference type="FunFam" id="3.40.50.620:FF:000395">
    <property type="entry name" value="Leucine--tRNA ligase"/>
    <property type="match status" value="1"/>
</dbReference>
<dbReference type="FunFam" id="3.90.740.10:FF:000012">
    <property type="entry name" value="Leucine--tRNA ligase"/>
    <property type="match status" value="1"/>
</dbReference>
<dbReference type="Gene3D" id="3.10.20.590">
    <property type="match status" value="1"/>
</dbReference>
<dbReference type="Gene3D" id="3.40.50.620">
    <property type="entry name" value="HUPs"/>
    <property type="match status" value="2"/>
</dbReference>
<dbReference type="Gene3D" id="1.10.730.10">
    <property type="entry name" value="Isoleucyl-tRNA Synthetase, Domain 1"/>
    <property type="match status" value="1"/>
</dbReference>
<dbReference type="HAMAP" id="MF_00049_B">
    <property type="entry name" value="Leu_tRNA_synth_B"/>
    <property type="match status" value="1"/>
</dbReference>
<dbReference type="InterPro" id="IPR001412">
    <property type="entry name" value="aa-tRNA-synth_I_CS"/>
</dbReference>
<dbReference type="InterPro" id="IPR002300">
    <property type="entry name" value="aa-tRNA-synth_Ia"/>
</dbReference>
<dbReference type="InterPro" id="IPR002302">
    <property type="entry name" value="Leu-tRNA-ligase"/>
</dbReference>
<dbReference type="InterPro" id="IPR025709">
    <property type="entry name" value="Leu_tRNA-synth_edit"/>
</dbReference>
<dbReference type="InterPro" id="IPR013155">
    <property type="entry name" value="M/V/L/I-tRNA-synth_anticd-bd"/>
</dbReference>
<dbReference type="InterPro" id="IPR015413">
    <property type="entry name" value="Methionyl/Leucyl_tRNA_Synth"/>
</dbReference>
<dbReference type="InterPro" id="IPR014729">
    <property type="entry name" value="Rossmann-like_a/b/a_fold"/>
</dbReference>
<dbReference type="InterPro" id="IPR009080">
    <property type="entry name" value="tRNAsynth_Ia_anticodon-bd"/>
</dbReference>
<dbReference type="InterPro" id="IPR009008">
    <property type="entry name" value="Val/Leu/Ile-tRNA-synth_edit"/>
</dbReference>
<dbReference type="NCBIfam" id="TIGR00396">
    <property type="entry name" value="leuS_bact"/>
    <property type="match status" value="1"/>
</dbReference>
<dbReference type="PANTHER" id="PTHR43740:SF2">
    <property type="entry name" value="LEUCINE--TRNA LIGASE, MITOCHONDRIAL"/>
    <property type="match status" value="1"/>
</dbReference>
<dbReference type="PANTHER" id="PTHR43740">
    <property type="entry name" value="LEUCYL-TRNA SYNTHETASE"/>
    <property type="match status" value="1"/>
</dbReference>
<dbReference type="Pfam" id="PF08264">
    <property type="entry name" value="Anticodon_1"/>
    <property type="match status" value="1"/>
</dbReference>
<dbReference type="Pfam" id="PF00133">
    <property type="entry name" value="tRNA-synt_1"/>
    <property type="match status" value="1"/>
</dbReference>
<dbReference type="Pfam" id="PF13603">
    <property type="entry name" value="tRNA-synt_1_2"/>
    <property type="match status" value="1"/>
</dbReference>
<dbReference type="Pfam" id="PF09334">
    <property type="entry name" value="tRNA-synt_1g"/>
    <property type="match status" value="1"/>
</dbReference>
<dbReference type="PRINTS" id="PR00985">
    <property type="entry name" value="TRNASYNTHLEU"/>
</dbReference>
<dbReference type="SUPFAM" id="SSF47323">
    <property type="entry name" value="Anticodon-binding domain of a subclass of class I aminoacyl-tRNA synthetases"/>
    <property type="match status" value="1"/>
</dbReference>
<dbReference type="SUPFAM" id="SSF52374">
    <property type="entry name" value="Nucleotidylyl transferase"/>
    <property type="match status" value="1"/>
</dbReference>
<dbReference type="SUPFAM" id="SSF50677">
    <property type="entry name" value="ValRS/IleRS/LeuRS editing domain"/>
    <property type="match status" value="1"/>
</dbReference>
<dbReference type="PROSITE" id="PS00178">
    <property type="entry name" value="AA_TRNA_LIGASE_I"/>
    <property type="match status" value="1"/>
</dbReference>
<evidence type="ECO:0000255" key="1">
    <source>
        <dbReference type="HAMAP-Rule" id="MF_00049"/>
    </source>
</evidence>
<accession>A5IBJ1</accession>
<feature type="chain" id="PRO_1000009363" description="Leucine--tRNA ligase">
    <location>
        <begin position="1"/>
        <end position="823"/>
    </location>
</feature>
<feature type="short sequence motif" description="'HIGH' region">
    <location>
        <begin position="42"/>
        <end position="52"/>
    </location>
</feature>
<feature type="short sequence motif" description="'KMSKS' region">
    <location>
        <begin position="575"/>
        <end position="579"/>
    </location>
</feature>
<feature type="binding site" evidence="1">
    <location>
        <position position="578"/>
    </location>
    <ligand>
        <name>ATP</name>
        <dbReference type="ChEBI" id="CHEBI:30616"/>
    </ligand>
</feature>
<sequence>MDNTYNPQEVEEQAQQYWHKKQSFNVTEDLNKEKFYCLSMFPYPSGTLHMGHVRNYTLGDVIARYQRALGKNVLQPIGWDAFGLPAENAAIKNKIPPAEWTRKNIAAMKEQFLRLGNAYDWKRELTTCDPEYYRWEQWFFIRLFEKGLVYKKNAVVNWDPVDQTVLANEQVVDGRGWRSGALVERKEISQWFIKITSYADELLSSLDSLDEWPAQVKQMQRNWIGKSIGTEIYFNVNNYPKRLKIYTTRPDTLMGATYLAVATDHPLAKEAASNNKKVQEFLDSCQGIKIAEAELATMEKRGIDTGMTAIHPITGKELPIWVANFVLMQYGSGAVMAVPAHDQRDWEFAQKYQLPVKQVIKPIDIEHDFNQSAYTEEGILINSNQFDNLLSSKAIQVITNFLEENDAGKATINYRLRDWGVSRQRYWGTPIPMIICEQCGIVPVPDEELPVVLPENVDFTGTGSPLTQCKEFVNVTCPKCGQDATRETDTFDTFVESSWYYARFACKGQENAMLDDRAKYWTPVDQYIGGIEHAVMHLLYARFFHKLMRDEGLVNSDEPFKALLTQGMVLKDGHKMSKSLGNVVDPNHLINTYGADTARLFVMFASPPEQSLEWSDSGVEGAHRFLKRVWAFSHQHRDMLIDINDSILSGNGHVDWKEAESRLKKSRHIVHQILAQATHDYDRNQFNTVVSGCMKLFNEISDYSIETENDKFFIHSSISILLRLLAPITPHICHCLWQQLGFDKAIIDAPWPKVDKSALKTDEVDYVVQVNGKLRAQFTASTDATEEELIAAAKEHAHNFVVNHTIKKAIIVPHRQLINLVIG</sequence>